<gene>
    <name evidence="1" type="primary">rpmB</name>
    <name type="ordered locus">BAV2485</name>
</gene>
<evidence type="ECO:0000255" key="1">
    <source>
        <dbReference type="HAMAP-Rule" id="MF_00373"/>
    </source>
</evidence>
<evidence type="ECO:0000305" key="2"/>
<feature type="chain" id="PRO_1000007178" description="Large ribosomal subunit protein bL28">
    <location>
        <begin position="1"/>
        <end position="78"/>
    </location>
</feature>
<name>RL28_BORA1</name>
<comment type="similarity">
    <text evidence="1">Belongs to the bacterial ribosomal protein bL28 family.</text>
</comment>
<protein>
    <recommendedName>
        <fullName evidence="1">Large ribosomal subunit protein bL28</fullName>
    </recommendedName>
    <alternativeName>
        <fullName evidence="2">50S ribosomal protein L28</fullName>
    </alternativeName>
</protein>
<sequence>MARVCQVTGKGPMVGNNVSHANNKTKRRFLPNLQSRRFWVESENRWVRLRVTAKAIRTIDKNGIDAVLADLRARGEAV</sequence>
<accession>Q2KXH8</accession>
<proteinExistence type="inferred from homology"/>
<reference key="1">
    <citation type="journal article" date="2006" name="J. Bacteriol.">
        <title>Comparison of the genome sequence of the poultry pathogen Bordetella avium with those of B. bronchiseptica, B. pertussis, and B. parapertussis reveals extensive diversity in surface structures associated with host interaction.</title>
        <authorList>
            <person name="Sebaihia M."/>
            <person name="Preston A."/>
            <person name="Maskell D.J."/>
            <person name="Kuzmiak H."/>
            <person name="Connell T.D."/>
            <person name="King N.D."/>
            <person name="Orndorff P.E."/>
            <person name="Miyamoto D.M."/>
            <person name="Thomson N.R."/>
            <person name="Harris D."/>
            <person name="Goble A."/>
            <person name="Lord A."/>
            <person name="Murphy L."/>
            <person name="Quail M.A."/>
            <person name="Rutter S."/>
            <person name="Squares R."/>
            <person name="Squares S."/>
            <person name="Woodward J."/>
            <person name="Parkhill J."/>
            <person name="Temple L.M."/>
        </authorList>
    </citation>
    <scope>NUCLEOTIDE SEQUENCE [LARGE SCALE GENOMIC DNA]</scope>
    <source>
        <strain>197N</strain>
    </source>
</reference>
<dbReference type="EMBL" id="AM167904">
    <property type="protein sequence ID" value="CAJ50095.1"/>
    <property type="molecule type" value="Genomic_DNA"/>
</dbReference>
<dbReference type="RefSeq" id="WP_003810297.1">
    <property type="nucleotide sequence ID" value="NC_010645.1"/>
</dbReference>
<dbReference type="SMR" id="Q2KXH8"/>
<dbReference type="STRING" id="360910.BAV2485"/>
<dbReference type="GeneID" id="93203501"/>
<dbReference type="KEGG" id="bav:BAV2485"/>
<dbReference type="eggNOG" id="COG0227">
    <property type="taxonomic scope" value="Bacteria"/>
</dbReference>
<dbReference type="HOGENOM" id="CLU_064548_3_1_4"/>
<dbReference type="OrthoDB" id="9805609at2"/>
<dbReference type="Proteomes" id="UP000001977">
    <property type="component" value="Chromosome"/>
</dbReference>
<dbReference type="GO" id="GO:0022625">
    <property type="term" value="C:cytosolic large ribosomal subunit"/>
    <property type="evidence" value="ECO:0007669"/>
    <property type="project" value="TreeGrafter"/>
</dbReference>
<dbReference type="GO" id="GO:0003735">
    <property type="term" value="F:structural constituent of ribosome"/>
    <property type="evidence" value="ECO:0007669"/>
    <property type="project" value="InterPro"/>
</dbReference>
<dbReference type="GO" id="GO:0006412">
    <property type="term" value="P:translation"/>
    <property type="evidence" value="ECO:0007669"/>
    <property type="project" value="UniProtKB-UniRule"/>
</dbReference>
<dbReference type="FunFam" id="2.30.170.40:FF:000001">
    <property type="entry name" value="50S ribosomal protein L28"/>
    <property type="match status" value="1"/>
</dbReference>
<dbReference type="Gene3D" id="2.30.170.40">
    <property type="entry name" value="Ribosomal protein L28/L24"/>
    <property type="match status" value="1"/>
</dbReference>
<dbReference type="HAMAP" id="MF_00373">
    <property type="entry name" value="Ribosomal_bL28"/>
    <property type="match status" value="1"/>
</dbReference>
<dbReference type="InterPro" id="IPR026569">
    <property type="entry name" value="Ribosomal_bL28"/>
</dbReference>
<dbReference type="InterPro" id="IPR034704">
    <property type="entry name" value="Ribosomal_bL28/bL31-like_sf"/>
</dbReference>
<dbReference type="InterPro" id="IPR001383">
    <property type="entry name" value="Ribosomal_bL28_bact-type"/>
</dbReference>
<dbReference type="InterPro" id="IPR037147">
    <property type="entry name" value="Ribosomal_bL28_sf"/>
</dbReference>
<dbReference type="NCBIfam" id="TIGR00009">
    <property type="entry name" value="L28"/>
    <property type="match status" value="1"/>
</dbReference>
<dbReference type="PANTHER" id="PTHR13528">
    <property type="entry name" value="39S RIBOSOMAL PROTEIN L28, MITOCHONDRIAL"/>
    <property type="match status" value="1"/>
</dbReference>
<dbReference type="PANTHER" id="PTHR13528:SF2">
    <property type="entry name" value="LARGE RIBOSOMAL SUBUNIT PROTEIN BL28M"/>
    <property type="match status" value="1"/>
</dbReference>
<dbReference type="Pfam" id="PF00830">
    <property type="entry name" value="Ribosomal_L28"/>
    <property type="match status" value="1"/>
</dbReference>
<dbReference type="SUPFAM" id="SSF143800">
    <property type="entry name" value="L28p-like"/>
    <property type="match status" value="1"/>
</dbReference>
<organism>
    <name type="scientific">Bordetella avium (strain 197N)</name>
    <dbReference type="NCBI Taxonomy" id="360910"/>
    <lineage>
        <taxon>Bacteria</taxon>
        <taxon>Pseudomonadati</taxon>
        <taxon>Pseudomonadota</taxon>
        <taxon>Betaproteobacteria</taxon>
        <taxon>Burkholderiales</taxon>
        <taxon>Alcaligenaceae</taxon>
        <taxon>Bordetella</taxon>
    </lineage>
</organism>
<keyword id="KW-1185">Reference proteome</keyword>
<keyword id="KW-0687">Ribonucleoprotein</keyword>
<keyword id="KW-0689">Ribosomal protein</keyword>